<comment type="function">
    <text evidence="1">Catalyzes the transfer of a dimethylallyl group onto the adenine at position 37 in tRNAs that read codons beginning with uridine, leading to the formation of N6-(dimethylallyl)adenosine (i(6)A).</text>
</comment>
<comment type="catalytic activity">
    <reaction evidence="1">
        <text>adenosine(37) in tRNA + dimethylallyl diphosphate = N(6)-dimethylallyladenosine(37) in tRNA + diphosphate</text>
        <dbReference type="Rhea" id="RHEA:26482"/>
        <dbReference type="Rhea" id="RHEA-COMP:10162"/>
        <dbReference type="Rhea" id="RHEA-COMP:10375"/>
        <dbReference type="ChEBI" id="CHEBI:33019"/>
        <dbReference type="ChEBI" id="CHEBI:57623"/>
        <dbReference type="ChEBI" id="CHEBI:74411"/>
        <dbReference type="ChEBI" id="CHEBI:74415"/>
        <dbReference type="EC" id="2.5.1.75"/>
    </reaction>
</comment>
<comment type="cofactor">
    <cofactor evidence="1">
        <name>Mg(2+)</name>
        <dbReference type="ChEBI" id="CHEBI:18420"/>
    </cofactor>
</comment>
<comment type="subunit">
    <text evidence="1">Monomer.</text>
</comment>
<comment type="similarity">
    <text evidence="1">Belongs to the IPP transferase family.</text>
</comment>
<protein>
    <recommendedName>
        <fullName evidence="1">tRNA dimethylallyltransferase</fullName>
        <ecNumber evidence="1">2.5.1.75</ecNumber>
    </recommendedName>
    <alternativeName>
        <fullName evidence="1">Dimethylallyl diphosphate:tRNA dimethylallyltransferase</fullName>
        <shortName evidence="1">DMAPP:tRNA dimethylallyltransferase</shortName>
        <shortName evidence="1">DMATase</shortName>
    </alternativeName>
    <alternativeName>
        <fullName evidence="1">Isopentenyl-diphosphate:tRNA isopentenyltransferase</fullName>
        <shortName evidence="1">IPP transferase</shortName>
        <shortName evidence="1">IPPT</shortName>
        <shortName evidence="1">IPTase</shortName>
    </alternativeName>
</protein>
<gene>
    <name evidence="1" type="primary">miaA</name>
    <name type="ordered locus">LBF_0460</name>
</gene>
<name>MIAA_LEPBA</name>
<reference key="1">
    <citation type="journal article" date="2008" name="PLoS ONE">
        <title>Genome sequence of the saprophyte Leptospira biflexa provides insights into the evolution of Leptospira and the pathogenesis of leptospirosis.</title>
        <authorList>
            <person name="Picardeau M."/>
            <person name="Bulach D.M."/>
            <person name="Bouchier C."/>
            <person name="Zuerner R.L."/>
            <person name="Zidane N."/>
            <person name="Wilson P.J."/>
            <person name="Creno S."/>
            <person name="Kuczek E.S."/>
            <person name="Bommezzadri S."/>
            <person name="Davis J.C."/>
            <person name="McGrath A."/>
            <person name="Johnson M.J."/>
            <person name="Boursaux-Eude C."/>
            <person name="Seemann T."/>
            <person name="Rouy Z."/>
            <person name="Coppel R.L."/>
            <person name="Rood J.I."/>
            <person name="Lajus A."/>
            <person name="Davies J.K."/>
            <person name="Medigue C."/>
            <person name="Adler B."/>
        </authorList>
    </citation>
    <scope>NUCLEOTIDE SEQUENCE [LARGE SCALE GENOMIC DNA]</scope>
    <source>
        <strain>Patoc 1 / Ames</strain>
    </source>
</reference>
<sequence length="296" mass="33514">MILPILGGPTGSGKTSLTQVLDPKRFEIVSFDSRQVYRDLPVGTTAPTPEECSTIRHWLIGFLNANESINANQFSLLARNAIADIQSRGKIPFLLGGTGFYLRAFLLGMYPVPTVPKETKDYVFTLPLEEARSQLLAKDPKAMESLSDQDGYRIKRALEVVLTGVLWSDVSKETVGGFWKDNPEVKIVGHWLDWPREILYQRINTRVETIIRGMLEETKEVLSKYGPDCPGLRTLGYNFALAFLNGMIDSNTFIEQLAQSHRNYAKRQITWFKKESFLSPISYDAAVQLYTNIEQR</sequence>
<proteinExistence type="inferred from homology"/>
<accession>B0SBH8</accession>
<dbReference type="EC" id="2.5.1.75" evidence="1"/>
<dbReference type="EMBL" id="CP000777">
    <property type="protein sequence ID" value="ABZ92999.1"/>
    <property type="molecule type" value="Genomic_DNA"/>
</dbReference>
<dbReference type="RefSeq" id="WP_012387503.1">
    <property type="nucleotide sequence ID" value="NC_010842.1"/>
</dbReference>
<dbReference type="SMR" id="B0SBH8"/>
<dbReference type="KEGG" id="lbf:LBF_0460"/>
<dbReference type="HOGENOM" id="CLU_032616_0_1_12"/>
<dbReference type="GO" id="GO:0005524">
    <property type="term" value="F:ATP binding"/>
    <property type="evidence" value="ECO:0007669"/>
    <property type="project" value="UniProtKB-UniRule"/>
</dbReference>
<dbReference type="GO" id="GO:0052381">
    <property type="term" value="F:tRNA dimethylallyltransferase activity"/>
    <property type="evidence" value="ECO:0007669"/>
    <property type="project" value="UniProtKB-UniRule"/>
</dbReference>
<dbReference type="GO" id="GO:0006400">
    <property type="term" value="P:tRNA modification"/>
    <property type="evidence" value="ECO:0007669"/>
    <property type="project" value="TreeGrafter"/>
</dbReference>
<dbReference type="Gene3D" id="1.10.20.140">
    <property type="match status" value="1"/>
</dbReference>
<dbReference type="Gene3D" id="3.40.50.300">
    <property type="entry name" value="P-loop containing nucleotide triphosphate hydrolases"/>
    <property type="match status" value="1"/>
</dbReference>
<dbReference type="HAMAP" id="MF_00185">
    <property type="entry name" value="IPP_trans"/>
    <property type="match status" value="1"/>
</dbReference>
<dbReference type="InterPro" id="IPR039657">
    <property type="entry name" value="Dimethylallyltransferase"/>
</dbReference>
<dbReference type="InterPro" id="IPR018022">
    <property type="entry name" value="IPT"/>
</dbReference>
<dbReference type="InterPro" id="IPR027417">
    <property type="entry name" value="P-loop_NTPase"/>
</dbReference>
<dbReference type="NCBIfam" id="TIGR00174">
    <property type="entry name" value="miaA"/>
    <property type="match status" value="1"/>
</dbReference>
<dbReference type="PANTHER" id="PTHR11088">
    <property type="entry name" value="TRNA DIMETHYLALLYLTRANSFERASE"/>
    <property type="match status" value="1"/>
</dbReference>
<dbReference type="PANTHER" id="PTHR11088:SF60">
    <property type="entry name" value="TRNA DIMETHYLALLYLTRANSFERASE"/>
    <property type="match status" value="1"/>
</dbReference>
<dbReference type="Pfam" id="PF01715">
    <property type="entry name" value="IPPT"/>
    <property type="match status" value="1"/>
</dbReference>
<dbReference type="SUPFAM" id="SSF52540">
    <property type="entry name" value="P-loop containing nucleoside triphosphate hydrolases"/>
    <property type="match status" value="1"/>
</dbReference>
<keyword id="KW-0067">ATP-binding</keyword>
<keyword id="KW-0460">Magnesium</keyword>
<keyword id="KW-0547">Nucleotide-binding</keyword>
<keyword id="KW-0808">Transferase</keyword>
<keyword id="KW-0819">tRNA processing</keyword>
<organism>
    <name type="scientific">Leptospira biflexa serovar Patoc (strain Patoc 1 / Ames)</name>
    <dbReference type="NCBI Taxonomy" id="355278"/>
    <lineage>
        <taxon>Bacteria</taxon>
        <taxon>Pseudomonadati</taxon>
        <taxon>Spirochaetota</taxon>
        <taxon>Spirochaetia</taxon>
        <taxon>Leptospirales</taxon>
        <taxon>Leptospiraceae</taxon>
        <taxon>Leptospira</taxon>
    </lineage>
</organism>
<evidence type="ECO:0000255" key="1">
    <source>
        <dbReference type="HAMAP-Rule" id="MF_00185"/>
    </source>
</evidence>
<feature type="chain" id="PRO_0000377202" description="tRNA dimethylallyltransferase">
    <location>
        <begin position="1"/>
        <end position="296"/>
    </location>
</feature>
<feature type="region of interest" description="Interaction with substrate tRNA" evidence="1">
    <location>
        <begin position="32"/>
        <end position="35"/>
    </location>
</feature>
<feature type="binding site" evidence="1">
    <location>
        <begin position="8"/>
        <end position="15"/>
    </location>
    <ligand>
        <name>ATP</name>
        <dbReference type="ChEBI" id="CHEBI:30616"/>
    </ligand>
</feature>
<feature type="binding site" evidence="1">
    <location>
        <begin position="10"/>
        <end position="15"/>
    </location>
    <ligand>
        <name>substrate</name>
    </ligand>
</feature>
<feature type="site" description="Interaction with substrate tRNA" evidence="1">
    <location>
        <position position="98"/>
    </location>
</feature>